<sequence length="798" mass="92226">MASLSTPNINNTTFVNSKTQLPAVKVHLQKCYVGPWLNRGSKHMFTNYQFGHRQISKVAKYQASPDVVQVCDKVEHSTAQSFELVDKKIEDNIRYVKELLNSIDDGHISVSAYDTAWFALIRDLDGRDCPQFPSTIEWIADNQLADGSWGDEDFYSAYDRLINTLACVLALRTWNVHPEKSEKGISYIKENLHELEDAEAENMTCAFELLFPVLLKRAENLGINEIPYDAPIIKEIYNIRDTKLTRIPLEVLHERSTSILYGMEGLENLDLDWQKLMKLQTPEGSFLTSPAATAFAFMYTKDENCLKYIKYILDKFNGAAVDVYPVDLFARLWAVDRLQRLGISRFFESEIKDCLSYVHRFWTEKGIFSGRHALFHDLDDTSMGFRLLRQHGYDMDPNVFKHFQKDGRFHCLGGDMSDSLTVTYNLYRASQTQFPGEEILEEARNFCYNFLQDRAARNQLVDKWVISKHLADEMRTGLQLPWYASLPRVEARYYLQHYAGSGDVWLGKNFFRMEDISNDKYKEIAKLDFSRCQAQHQFEWTYMQGWYESSNVQEFGISRKDLLVAYFLAAATIFERERTKERIVWAKSHIVSRMIKSFFTNETTSLEEKVALLTGFEDNINGLHKITSAKREHEHVDILLATLHQLLGEFDEYASHQLKNAWRVWLTKLEQGEAGAEAELLVTTLNICAGHDIAFKEDILSQNEYKTLSNLTNKICQQLTQIQNKKVMETNDSNSIQDKEIEHDMQALVKSVLEEAVGIDRNIKQTFLSVAKTYYYGAYIAAETIDVHIFKVLFEPVI</sequence>
<proteinExistence type="evidence at protein level"/>
<accession>A0A2K9RFZ7</accession>
<feature type="transit peptide" description="Chloroplast" evidence="3">
    <location>
        <begin position="1"/>
        <end position="25"/>
    </location>
</feature>
<feature type="chain" id="PRO_0000449307" description="Peregrinol diphosphate synthase TPS1, chloroplastic">
    <location>
        <begin position="26"/>
        <end position="798"/>
    </location>
</feature>
<feature type="short sequence motif" description="DXDD motif" evidence="6">
    <location>
        <begin position="377"/>
        <end position="380"/>
    </location>
</feature>
<feature type="binding site" evidence="2">
    <location>
        <position position="243"/>
    </location>
    <ligand>
        <name>substrate</name>
    </ligand>
</feature>
<feature type="binding site" evidence="1">
    <location>
        <position position="377"/>
    </location>
    <ligand>
        <name>Mg(2+)</name>
        <dbReference type="ChEBI" id="CHEBI:18420"/>
    </ligand>
</feature>
<feature type="binding site" evidence="1">
    <location>
        <position position="379"/>
    </location>
    <ligand>
        <name>Mg(2+)</name>
        <dbReference type="ChEBI" id="CHEBI:18420"/>
    </ligand>
</feature>
<feature type="binding site" evidence="2">
    <location>
        <position position="463"/>
    </location>
    <ligand>
        <name>substrate</name>
    </ligand>
</feature>
<protein>
    <recommendedName>
        <fullName evidence="5">Peregrinol diphosphate synthase TPS1, chloroplastic</fullName>
        <ecNumber evidence="4">4.2.1.174</ecNumber>
    </recommendedName>
    <alternativeName>
        <fullName evidence="5">Terpene synthase 1</fullName>
        <shortName evidence="5">VacTPS1</shortName>
    </alternativeName>
</protein>
<reference key="1">
    <citation type="journal article" date="2018" name="Plant J.">
        <title>Biosynthesis of bioactive diterpenoids in the medicinal plant Vitex agnus-castus.</title>
        <authorList>
            <person name="Heskes A.M."/>
            <person name="Sundram T.C.M."/>
            <person name="Boughton B.A."/>
            <person name="Jensen N.B."/>
            <person name="Hansen N.L."/>
            <person name="Crocoll C."/>
            <person name="Cozzi F."/>
            <person name="Rasmussen S."/>
            <person name="Hamberger B."/>
            <person name="Hamberger B."/>
            <person name="Staerk D."/>
            <person name="Moeller B.L."/>
            <person name="Pateraki I."/>
        </authorList>
    </citation>
    <scope>NUCLEOTIDE SEQUENCE [MRNA]</scope>
    <scope>FUNCTION</scope>
    <scope>CATALYTIC ACTIVITY</scope>
    <scope>PATHWAY</scope>
    <scope>TISSUE SPECIFICITY</scope>
    <source>
        <tissue>Fruit</tissue>
        <tissue>Leaf</tissue>
        <tissue>Trichome gland</tissue>
    </source>
</reference>
<reference key="2">
    <citation type="journal article" date="2003" name="Phytomedicine">
        <title>Chaste tree (Vitex agnus-castus)--pharmacology and clinical indications.</title>
        <authorList>
            <person name="Wuttke W."/>
            <person name="Jarry H."/>
            <person name="Christoffel V."/>
            <person name="Spengler B."/>
            <person name="Seidlova-Wuttke D."/>
        </authorList>
    </citation>
    <scope>REVIEW ON MENSTRUAL CYCLE DISORDERS</scope>
</reference>
<reference key="3">
    <citation type="journal article" date="2019" name="Nat. Prod. Rep.">
        <title>Non-volatile natural products in plant glandular trichomes: chemistry, biological activities and biosynthesis.</title>
        <authorList>
            <person name="Liu Y."/>
            <person name="Jing S.-X."/>
            <person name="Luo S.-H."/>
            <person name="Li S.-H."/>
        </authorList>
    </citation>
    <scope>PATHWAY</scope>
    <scope>REVIEW</scope>
</reference>
<keyword id="KW-0150">Chloroplast</keyword>
<keyword id="KW-0413">Isomerase</keyword>
<keyword id="KW-0456">Lyase</keyword>
<keyword id="KW-0460">Magnesium</keyword>
<keyword id="KW-0479">Metal-binding</keyword>
<keyword id="KW-0934">Plastid</keyword>
<keyword id="KW-0809">Transit peptide</keyword>
<gene>
    <name evidence="5" type="primary">TPS1</name>
</gene>
<comment type="function">
    <text evidence="4 7 8 9">Involved in the biosynthesis of labdane-type diterpenoid including cleroda-dienols, and peregrinol lactones and furan derivatives, dopaminergic diterpenoids that can bind to dopamine receptors in the human pituitary gland, have probably ability to lower prolactin levels, and are used to treat menstrual cycle disorders (e.g. premenstrual syndrome and mastodynia) (Probable). Terpene synthase that produces peregrinol diphosphate from geranylgeranyl diphosphate (GGPP) (PubMed:29315936).</text>
</comment>
<comment type="catalytic activity">
    <reaction evidence="4">
        <text>peregrinol diphosphate = (2E,6E,10E)-geranylgeranyl diphosphate + H2O</text>
        <dbReference type="Rhea" id="RHEA:54652"/>
        <dbReference type="ChEBI" id="CHEBI:15377"/>
        <dbReference type="ChEBI" id="CHEBI:58756"/>
        <dbReference type="ChEBI" id="CHEBI:138232"/>
        <dbReference type="EC" id="4.2.1.174"/>
    </reaction>
    <physiologicalReaction direction="right-to-left" evidence="4">
        <dbReference type="Rhea" id="RHEA:54654"/>
    </physiologicalReaction>
</comment>
<comment type="cofactor">
    <cofactor evidence="2">
        <name>Mg(2+)</name>
        <dbReference type="ChEBI" id="CHEBI:18420"/>
    </cofactor>
</comment>
<comment type="pathway">
    <text evidence="8 9">Secondary metabolite biosynthesis; terpenoid biosynthesis.</text>
</comment>
<comment type="subcellular location">
    <subcellularLocation>
        <location evidence="3">Plastid</location>
        <location evidence="3">Chloroplast</location>
    </subcellularLocation>
</comment>
<comment type="tissue specificity">
    <text evidence="4">Mostly expressed in trichomes of leaves and fruits.</text>
</comment>
<comment type="domain">
    <text evidence="6">The Asp-Xaa-Asp-Asp (DXDD) motif is important for the catalytic activity, presumably through binding to Mg(2+).</text>
</comment>
<comment type="similarity">
    <text evidence="6">Belongs to the terpene synthase family.</text>
</comment>
<dbReference type="EC" id="4.2.1.174" evidence="4"/>
<dbReference type="EMBL" id="MG696748">
    <property type="protein sequence ID" value="AUT77120.1"/>
    <property type="molecule type" value="mRNA"/>
</dbReference>
<dbReference type="SMR" id="A0A2K9RFZ7"/>
<dbReference type="UniPathway" id="UPA00213"/>
<dbReference type="GO" id="GO:0009507">
    <property type="term" value="C:chloroplast"/>
    <property type="evidence" value="ECO:0007669"/>
    <property type="project" value="UniProtKB-SubCell"/>
</dbReference>
<dbReference type="GO" id="GO:0016853">
    <property type="term" value="F:isomerase activity"/>
    <property type="evidence" value="ECO:0007669"/>
    <property type="project" value="UniProtKB-KW"/>
</dbReference>
<dbReference type="GO" id="GO:0000287">
    <property type="term" value="F:magnesium ion binding"/>
    <property type="evidence" value="ECO:0007669"/>
    <property type="project" value="TreeGrafter"/>
</dbReference>
<dbReference type="GO" id="GO:0106238">
    <property type="term" value="F:peregrinol diphosphate synthase activity"/>
    <property type="evidence" value="ECO:0000314"/>
    <property type="project" value="UniProtKB"/>
</dbReference>
<dbReference type="GO" id="GO:0010333">
    <property type="term" value="F:terpene synthase activity"/>
    <property type="evidence" value="ECO:0007669"/>
    <property type="project" value="InterPro"/>
</dbReference>
<dbReference type="GO" id="GO:0009686">
    <property type="term" value="P:gibberellin biosynthetic process"/>
    <property type="evidence" value="ECO:0007669"/>
    <property type="project" value="TreeGrafter"/>
</dbReference>
<dbReference type="FunFam" id="1.50.10.130:FF:000002">
    <property type="entry name" value="Ent-copalyl diphosphate synthase, chloroplastic"/>
    <property type="match status" value="1"/>
</dbReference>
<dbReference type="Gene3D" id="1.50.10.160">
    <property type="match status" value="1"/>
</dbReference>
<dbReference type="Gene3D" id="1.10.600.10">
    <property type="entry name" value="Farnesyl Diphosphate Synthase"/>
    <property type="match status" value="1"/>
</dbReference>
<dbReference type="Gene3D" id="1.50.10.130">
    <property type="entry name" value="Terpene synthase, N-terminal domain"/>
    <property type="match status" value="1"/>
</dbReference>
<dbReference type="InterPro" id="IPR008949">
    <property type="entry name" value="Isoprenoid_synthase_dom_sf"/>
</dbReference>
<dbReference type="InterPro" id="IPR001906">
    <property type="entry name" value="Terpene_synth_N"/>
</dbReference>
<dbReference type="InterPro" id="IPR036965">
    <property type="entry name" value="Terpene_synth_N_sf"/>
</dbReference>
<dbReference type="InterPro" id="IPR050148">
    <property type="entry name" value="Terpene_synthase-like"/>
</dbReference>
<dbReference type="InterPro" id="IPR008930">
    <property type="entry name" value="Terpenoid_cyclase/PrenylTrfase"/>
</dbReference>
<dbReference type="PANTHER" id="PTHR31739:SF30">
    <property type="entry name" value="COPAL-8-OL DIPHOSPHATE HYDRATASE, CHLOROPLASTIC"/>
    <property type="match status" value="1"/>
</dbReference>
<dbReference type="PANTHER" id="PTHR31739">
    <property type="entry name" value="ENT-COPALYL DIPHOSPHATE SYNTHASE, CHLOROPLASTIC"/>
    <property type="match status" value="1"/>
</dbReference>
<dbReference type="Pfam" id="PF01397">
    <property type="entry name" value="Terpene_synth"/>
    <property type="match status" value="1"/>
</dbReference>
<dbReference type="SFLD" id="SFLDG01014">
    <property type="entry name" value="Terpene_Cyclase_Like_1_N-term"/>
    <property type="match status" value="1"/>
</dbReference>
<dbReference type="SFLD" id="SFLDG01605">
    <property type="entry name" value="Terpene_Cyclase_Like_1_N-term"/>
    <property type="match status" value="1"/>
</dbReference>
<dbReference type="SUPFAM" id="SSF48239">
    <property type="entry name" value="Terpenoid cyclases/Protein prenyltransferases"/>
    <property type="match status" value="2"/>
</dbReference>
<dbReference type="SUPFAM" id="SSF48576">
    <property type="entry name" value="Terpenoid synthases"/>
    <property type="match status" value="1"/>
</dbReference>
<organism>
    <name type="scientific">Vitex agnus-castus</name>
    <name type="common">Chaste tree</name>
    <dbReference type="NCBI Taxonomy" id="54477"/>
    <lineage>
        <taxon>Eukaryota</taxon>
        <taxon>Viridiplantae</taxon>
        <taxon>Streptophyta</taxon>
        <taxon>Embryophyta</taxon>
        <taxon>Tracheophyta</taxon>
        <taxon>Spermatophyta</taxon>
        <taxon>Magnoliopsida</taxon>
        <taxon>eudicotyledons</taxon>
        <taxon>Gunneridae</taxon>
        <taxon>Pentapetalae</taxon>
        <taxon>asterids</taxon>
        <taxon>lamiids</taxon>
        <taxon>Lamiales</taxon>
        <taxon>Lamiaceae</taxon>
        <taxon>Viticoideae</taxon>
        <taxon>Vitex</taxon>
    </lineage>
</organism>
<name>TPS1_VITAC</name>
<evidence type="ECO:0000250" key="1">
    <source>
        <dbReference type="UniProtKB" id="C7BKP9"/>
    </source>
</evidence>
<evidence type="ECO:0000250" key="2">
    <source>
        <dbReference type="UniProtKB" id="Q38802"/>
    </source>
</evidence>
<evidence type="ECO:0000255" key="3"/>
<evidence type="ECO:0000269" key="4">
    <source>
    </source>
</evidence>
<evidence type="ECO:0000303" key="5">
    <source>
    </source>
</evidence>
<evidence type="ECO:0000305" key="6"/>
<evidence type="ECO:0000305" key="7">
    <source>
    </source>
</evidence>
<evidence type="ECO:0000305" key="8">
    <source>
    </source>
</evidence>
<evidence type="ECO:0000305" key="9">
    <source>
    </source>
</evidence>